<proteinExistence type="inferred from homology"/>
<name>SYS_METCA</name>
<dbReference type="EC" id="6.1.1.11" evidence="1"/>
<dbReference type="EMBL" id="AE017282">
    <property type="protein sequence ID" value="AAU92005.1"/>
    <property type="molecule type" value="Genomic_DNA"/>
</dbReference>
<dbReference type="RefSeq" id="WP_010961216.1">
    <property type="nucleotide sequence ID" value="NC_002977.6"/>
</dbReference>
<dbReference type="SMR" id="Q606P5"/>
<dbReference type="STRING" id="243233.MCA1971"/>
<dbReference type="GeneID" id="88224202"/>
<dbReference type="KEGG" id="mca:MCA1971"/>
<dbReference type="eggNOG" id="COG0172">
    <property type="taxonomic scope" value="Bacteria"/>
</dbReference>
<dbReference type="HOGENOM" id="CLU_023797_1_1_6"/>
<dbReference type="UniPathway" id="UPA00906">
    <property type="reaction ID" value="UER00895"/>
</dbReference>
<dbReference type="Proteomes" id="UP000006821">
    <property type="component" value="Chromosome"/>
</dbReference>
<dbReference type="GO" id="GO:0005737">
    <property type="term" value="C:cytoplasm"/>
    <property type="evidence" value="ECO:0007669"/>
    <property type="project" value="UniProtKB-SubCell"/>
</dbReference>
<dbReference type="GO" id="GO:0005524">
    <property type="term" value="F:ATP binding"/>
    <property type="evidence" value="ECO:0007669"/>
    <property type="project" value="UniProtKB-UniRule"/>
</dbReference>
<dbReference type="GO" id="GO:0004828">
    <property type="term" value="F:serine-tRNA ligase activity"/>
    <property type="evidence" value="ECO:0007669"/>
    <property type="project" value="UniProtKB-UniRule"/>
</dbReference>
<dbReference type="GO" id="GO:0016260">
    <property type="term" value="P:selenocysteine biosynthetic process"/>
    <property type="evidence" value="ECO:0007669"/>
    <property type="project" value="UniProtKB-UniRule"/>
</dbReference>
<dbReference type="GO" id="GO:0006434">
    <property type="term" value="P:seryl-tRNA aminoacylation"/>
    <property type="evidence" value="ECO:0007669"/>
    <property type="project" value="UniProtKB-UniRule"/>
</dbReference>
<dbReference type="CDD" id="cd00770">
    <property type="entry name" value="SerRS_core"/>
    <property type="match status" value="1"/>
</dbReference>
<dbReference type="Gene3D" id="3.30.930.10">
    <property type="entry name" value="Bira Bifunctional Protein, Domain 2"/>
    <property type="match status" value="1"/>
</dbReference>
<dbReference type="Gene3D" id="1.10.287.40">
    <property type="entry name" value="Serine-tRNA synthetase, tRNA binding domain"/>
    <property type="match status" value="1"/>
</dbReference>
<dbReference type="HAMAP" id="MF_00176">
    <property type="entry name" value="Ser_tRNA_synth_type1"/>
    <property type="match status" value="1"/>
</dbReference>
<dbReference type="InterPro" id="IPR002314">
    <property type="entry name" value="aa-tRNA-synt_IIb"/>
</dbReference>
<dbReference type="InterPro" id="IPR006195">
    <property type="entry name" value="aa-tRNA-synth_II"/>
</dbReference>
<dbReference type="InterPro" id="IPR045864">
    <property type="entry name" value="aa-tRNA-synth_II/BPL/LPL"/>
</dbReference>
<dbReference type="InterPro" id="IPR002317">
    <property type="entry name" value="Ser-tRNA-ligase_type_1"/>
</dbReference>
<dbReference type="InterPro" id="IPR015866">
    <property type="entry name" value="Ser-tRNA-synth_1_N"/>
</dbReference>
<dbReference type="InterPro" id="IPR042103">
    <property type="entry name" value="SerRS_1_N_sf"/>
</dbReference>
<dbReference type="InterPro" id="IPR033729">
    <property type="entry name" value="SerRS_core"/>
</dbReference>
<dbReference type="InterPro" id="IPR010978">
    <property type="entry name" value="tRNA-bd_arm"/>
</dbReference>
<dbReference type="NCBIfam" id="TIGR00414">
    <property type="entry name" value="serS"/>
    <property type="match status" value="1"/>
</dbReference>
<dbReference type="PANTHER" id="PTHR43697:SF1">
    <property type="entry name" value="SERINE--TRNA LIGASE"/>
    <property type="match status" value="1"/>
</dbReference>
<dbReference type="PANTHER" id="PTHR43697">
    <property type="entry name" value="SERYL-TRNA SYNTHETASE"/>
    <property type="match status" value="1"/>
</dbReference>
<dbReference type="Pfam" id="PF02403">
    <property type="entry name" value="Seryl_tRNA_N"/>
    <property type="match status" value="1"/>
</dbReference>
<dbReference type="Pfam" id="PF00587">
    <property type="entry name" value="tRNA-synt_2b"/>
    <property type="match status" value="1"/>
</dbReference>
<dbReference type="PIRSF" id="PIRSF001529">
    <property type="entry name" value="Ser-tRNA-synth_IIa"/>
    <property type="match status" value="1"/>
</dbReference>
<dbReference type="PRINTS" id="PR00981">
    <property type="entry name" value="TRNASYNTHSER"/>
</dbReference>
<dbReference type="SUPFAM" id="SSF55681">
    <property type="entry name" value="Class II aaRS and biotin synthetases"/>
    <property type="match status" value="1"/>
</dbReference>
<dbReference type="SUPFAM" id="SSF46589">
    <property type="entry name" value="tRNA-binding arm"/>
    <property type="match status" value="1"/>
</dbReference>
<dbReference type="PROSITE" id="PS50862">
    <property type="entry name" value="AA_TRNA_LIGASE_II"/>
    <property type="match status" value="1"/>
</dbReference>
<sequence length="427" mass="47956">MLDPRLFRTQLEETARQLGRRGFVLDTAAFGALEERRKALQVETQNLQNERNSRSRSIGQAKARGEDIEPLLAAVQGLGERLKENEAELASIQERMEALLLGVPNLLDTDVPEGRSEADNVEIRRWGEPPQFDFEPKDHVDLAVGLGCADFEAAAKLSGSRFVVLTGPLARLQRALTQFMLDIHTGEHGYIETYVPFLVNADSLRGTGQLPKFEEDLFKVQHEPVFYLIPTAEVPVTNLVRDEIVEEERLPLKYVCHTPCFRSEAGSYGRDVRGLIRQHQFEKVELVQIVRPEDSREAHEALTRHAEVILERLGLPYRRVLLCAGDTGFSSAKTYDLEVWLPGQQSYREISSCSNFRDFQARRLQARWRNPETGKPELVHTLNGSGLAVGRTLVAVLENCQDEAGRIRVPEVLVPYMGGVNLIGPAA</sequence>
<accession>Q606P5</accession>
<keyword id="KW-0030">Aminoacyl-tRNA synthetase</keyword>
<keyword id="KW-0067">ATP-binding</keyword>
<keyword id="KW-0963">Cytoplasm</keyword>
<keyword id="KW-0436">Ligase</keyword>
<keyword id="KW-0547">Nucleotide-binding</keyword>
<keyword id="KW-0648">Protein biosynthesis</keyword>
<keyword id="KW-1185">Reference proteome</keyword>
<comment type="function">
    <text evidence="1">Catalyzes the attachment of serine to tRNA(Ser). Is also able to aminoacylate tRNA(Sec) with serine, to form the misacylated tRNA L-seryl-tRNA(Sec), which will be further converted into selenocysteinyl-tRNA(Sec).</text>
</comment>
<comment type="catalytic activity">
    <reaction evidence="1">
        <text>tRNA(Ser) + L-serine + ATP = L-seryl-tRNA(Ser) + AMP + diphosphate + H(+)</text>
        <dbReference type="Rhea" id="RHEA:12292"/>
        <dbReference type="Rhea" id="RHEA-COMP:9669"/>
        <dbReference type="Rhea" id="RHEA-COMP:9703"/>
        <dbReference type="ChEBI" id="CHEBI:15378"/>
        <dbReference type="ChEBI" id="CHEBI:30616"/>
        <dbReference type="ChEBI" id="CHEBI:33019"/>
        <dbReference type="ChEBI" id="CHEBI:33384"/>
        <dbReference type="ChEBI" id="CHEBI:78442"/>
        <dbReference type="ChEBI" id="CHEBI:78533"/>
        <dbReference type="ChEBI" id="CHEBI:456215"/>
        <dbReference type="EC" id="6.1.1.11"/>
    </reaction>
</comment>
<comment type="catalytic activity">
    <reaction evidence="1">
        <text>tRNA(Sec) + L-serine + ATP = L-seryl-tRNA(Sec) + AMP + diphosphate + H(+)</text>
        <dbReference type="Rhea" id="RHEA:42580"/>
        <dbReference type="Rhea" id="RHEA-COMP:9742"/>
        <dbReference type="Rhea" id="RHEA-COMP:10128"/>
        <dbReference type="ChEBI" id="CHEBI:15378"/>
        <dbReference type="ChEBI" id="CHEBI:30616"/>
        <dbReference type="ChEBI" id="CHEBI:33019"/>
        <dbReference type="ChEBI" id="CHEBI:33384"/>
        <dbReference type="ChEBI" id="CHEBI:78442"/>
        <dbReference type="ChEBI" id="CHEBI:78533"/>
        <dbReference type="ChEBI" id="CHEBI:456215"/>
        <dbReference type="EC" id="6.1.1.11"/>
    </reaction>
</comment>
<comment type="pathway">
    <text evidence="1">Aminoacyl-tRNA biosynthesis; selenocysteinyl-tRNA(Sec) biosynthesis; L-seryl-tRNA(Sec) from L-serine and tRNA(Sec): step 1/1.</text>
</comment>
<comment type="subunit">
    <text evidence="1">Homodimer. The tRNA molecule binds across the dimer.</text>
</comment>
<comment type="subcellular location">
    <subcellularLocation>
        <location evidence="1">Cytoplasm</location>
    </subcellularLocation>
</comment>
<comment type="domain">
    <text evidence="1">Consists of two distinct domains, a catalytic core and a N-terminal extension that is involved in tRNA binding.</text>
</comment>
<comment type="similarity">
    <text evidence="1">Belongs to the class-II aminoacyl-tRNA synthetase family. Type-1 seryl-tRNA synthetase subfamily.</text>
</comment>
<protein>
    <recommendedName>
        <fullName evidence="1">Serine--tRNA ligase</fullName>
        <ecNumber evidence="1">6.1.1.11</ecNumber>
    </recommendedName>
    <alternativeName>
        <fullName evidence="1">Seryl-tRNA synthetase</fullName>
        <shortName evidence="1">SerRS</shortName>
    </alternativeName>
    <alternativeName>
        <fullName evidence="1">Seryl-tRNA(Ser/Sec) synthetase</fullName>
    </alternativeName>
</protein>
<organism>
    <name type="scientific">Methylococcus capsulatus (strain ATCC 33009 / NCIMB 11132 / Bath)</name>
    <dbReference type="NCBI Taxonomy" id="243233"/>
    <lineage>
        <taxon>Bacteria</taxon>
        <taxon>Pseudomonadati</taxon>
        <taxon>Pseudomonadota</taxon>
        <taxon>Gammaproteobacteria</taxon>
        <taxon>Methylococcales</taxon>
        <taxon>Methylococcaceae</taxon>
        <taxon>Methylococcus</taxon>
    </lineage>
</organism>
<gene>
    <name evidence="1" type="primary">serS</name>
    <name type="ordered locus">MCA1971</name>
</gene>
<evidence type="ECO:0000255" key="1">
    <source>
        <dbReference type="HAMAP-Rule" id="MF_00176"/>
    </source>
</evidence>
<feature type="chain" id="PRO_0000122077" description="Serine--tRNA ligase">
    <location>
        <begin position="1"/>
        <end position="427"/>
    </location>
</feature>
<feature type="binding site" evidence="1">
    <location>
        <begin position="231"/>
        <end position="233"/>
    </location>
    <ligand>
        <name>L-serine</name>
        <dbReference type="ChEBI" id="CHEBI:33384"/>
    </ligand>
</feature>
<feature type="binding site" evidence="1">
    <location>
        <begin position="262"/>
        <end position="264"/>
    </location>
    <ligand>
        <name>ATP</name>
        <dbReference type="ChEBI" id="CHEBI:30616"/>
    </ligand>
</feature>
<feature type="binding site" evidence="1">
    <location>
        <position position="285"/>
    </location>
    <ligand>
        <name>L-serine</name>
        <dbReference type="ChEBI" id="CHEBI:33384"/>
    </ligand>
</feature>
<feature type="binding site" evidence="1">
    <location>
        <begin position="349"/>
        <end position="352"/>
    </location>
    <ligand>
        <name>ATP</name>
        <dbReference type="ChEBI" id="CHEBI:30616"/>
    </ligand>
</feature>
<feature type="binding site" evidence="1">
    <location>
        <position position="385"/>
    </location>
    <ligand>
        <name>L-serine</name>
        <dbReference type="ChEBI" id="CHEBI:33384"/>
    </ligand>
</feature>
<reference key="1">
    <citation type="journal article" date="2004" name="PLoS Biol.">
        <title>Genomic insights into methanotrophy: the complete genome sequence of Methylococcus capsulatus (Bath).</title>
        <authorList>
            <person name="Ward N.L."/>
            <person name="Larsen O."/>
            <person name="Sakwa J."/>
            <person name="Bruseth L."/>
            <person name="Khouri H.M."/>
            <person name="Durkin A.S."/>
            <person name="Dimitrov G."/>
            <person name="Jiang L."/>
            <person name="Scanlan D."/>
            <person name="Kang K.H."/>
            <person name="Lewis M.R."/>
            <person name="Nelson K.E."/>
            <person name="Methe B.A."/>
            <person name="Wu M."/>
            <person name="Heidelberg J.F."/>
            <person name="Paulsen I.T."/>
            <person name="Fouts D.E."/>
            <person name="Ravel J."/>
            <person name="Tettelin H."/>
            <person name="Ren Q."/>
            <person name="Read T.D."/>
            <person name="DeBoy R.T."/>
            <person name="Seshadri R."/>
            <person name="Salzberg S.L."/>
            <person name="Jensen H.B."/>
            <person name="Birkeland N.K."/>
            <person name="Nelson W.C."/>
            <person name="Dodson R.J."/>
            <person name="Grindhaug S.H."/>
            <person name="Holt I.E."/>
            <person name="Eidhammer I."/>
            <person name="Jonasen I."/>
            <person name="Vanaken S."/>
            <person name="Utterback T.R."/>
            <person name="Feldblyum T.V."/>
            <person name="Fraser C.M."/>
            <person name="Lillehaug J.R."/>
            <person name="Eisen J.A."/>
        </authorList>
    </citation>
    <scope>NUCLEOTIDE SEQUENCE [LARGE SCALE GENOMIC DNA]</scope>
    <source>
        <strain>ATCC 33009 / NCIMB 11132 / Bath</strain>
    </source>
</reference>